<comment type="function">
    <text evidence="1">Catalyzes the last two sequential reactions in the de novo biosynthetic pathway for UDP-N-acetylglucosamine (UDP-GlcNAc). The C-terminal domain catalyzes the transfer of acetyl group from acetyl coenzyme A to glucosamine-1-phosphate (GlcN-1-P) to produce N-acetylglucosamine-1-phosphate (GlcNAc-1-P), which is converted into UDP-GlcNAc by the transfer of uridine 5-monophosphate (from uridine 5-triphosphate), a reaction catalyzed by the N-terminal domain.</text>
</comment>
<comment type="catalytic activity">
    <reaction evidence="1">
        <text>alpha-D-glucosamine 1-phosphate + acetyl-CoA = N-acetyl-alpha-D-glucosamine 1-phosphate + CoA + H(+)</text>
        <dbReference type="Rhea" id="RHEA:13725"/>
        <dbReference type="ChEBI" id="CHEBI:15378"/>
        <dbReference type="ChEBI" id="CHEBI:57287"/>
        <dbReference type="ChEBI" id="CHEBI:57288"/>
        <dbReference type="ChEBI" id="CHEBI:57776"/>
        <dbReference type="ChEBI" id="CHEBI:58516"/>
        <dbReference type="EC" id="2.3.1.157"/>
    </reaction>
</comment>
<comment type="catalytic activity">
    <reaction evidence="1">
        <text>N-acetyl-alpha-D-glucosamine 1-phosphate + UTP + H(+) = UDP-N-acetyl-alpha-D-glucosamine + diphosphate</text>
        <dbReference type="Rhea" id="RHEA:13509"/>
        <dbReference type="ChEBI" id="CHEBI:15378"/>
        <dbReference type="ChEBI" id="CHEBI:33019"/>
        <dbReference type="ChEBI" id="CHEBI:46398"/>
        <dbReference type="ChEBI" id="CHEBI:57705"/>
        <dbReference type="ChEBI" id="CHEBI:57776"/>
        <dbReference type="EC" id="2.7.7.23"/>
    </reaction>
</comment>
<comment type="cofactor">
    <cofactor evidence="1">
        <name>Mg(2+)</name>
        <dbReference type="ChEBI" id="CHEBI:18420"/>
    </cofactor>
    <text evidence="1">Binds 1 Mg(2+) ion per subunit.</text>
</comment>
<comment type="pathway">
    <text evidence="1">Nucleotide-sugar biosynthesis; UDP-N-acetyl-alpha-D-glucosamine biosynthesis; N-acetyl-alpha-D-glucosamine 1-phosphate from alpha-D-glucosamine 6-phosphate (route II): step 2/2.</text>
</comment>
<comment type="pathway">
    <text evidence="1">Nucleotide-sugar biosynthesis; UDP-N-acetyl-alpha-D-glucosamine biosynthesis; UDP-N-acetyl-alpha-D-glucosamine from N-acetyl-alpha-D-glucosamine 1-phosphate: step 1/1.</text>
</comment>
<comment type="pathway">
    <text evidence="1">Bacterial outer membrane biogenesis; LPS lipid A biosynthesis.</text>
</comment>
<comment type="subunit">
    <text evidence="1">Homotrimer.</text>
</comment>
<comment type="subcellular location">
    <subcellularLocation>
        <location evidence="1">Cytoplasm</location>
    </subcellularLocation>
</comment>
<comment type="similarity">
    <text evidence="1">In the N-terminal section; belongs to the N-acetylglucosamine-1-phosphate uridyltransferase family.</text>
</comment>
<comment type="similarity">
    <text evidence="1">In the C-terminal section; belongs to the transferase hexapeptide repeat family.</text>
</comment>
<feature type="chain" id="PRO_1000056212" description="Bifunctional protein GlmU">
    <location>
        <begin position="1"/>
        <end position="456"/>
    </location>
</feature>
<feature type="region of interest" description="Pyrophosphorylase" evidence="1">
    <location>
        <begin position="1"/>
        <end position="229"/>
    </location>
</feature>
<feature type="region of interest" description="Linker" evidence="1">
    <location>
        <begin position="230"/>
        <end position="250"/>
    </location>
</feature>
<feature type="region of interest" description="N-acetyltransferase" evidence="1">
    <location>
        <begin position="251"/>
        <end position="456"/>
    </location>
</feature>
<feature type="active site" description="Proton acceptor" evidence="1">
    <location>
        <position position="363"/>
    </location>
</feature>
<feature type="binding site" evidence="1">
    <location>
        <begin position="11"/>
        <end position="14"/>
    </location>
    <ligand>
        <name>UDP-N-acetyl-alpha-D-glucosamine</name>
        <dbReference type="ChEBI" id="CHEBI:57705"/>
    </ligand>
</feature>
<feature type="binding site" evidence="1">
    <location>
        <position position="25"/>
    </location>
    <ligand>
        <name>UDP-N-acetyl-alpha-D-glucosamine</name>
        <dbReference type="ChEBI" id="CHEBI:57705"/>
    </ligand>
</feature>
<feature type="binding site" evidence="1">
    <location>
        <position position="76"/>
    </location>
    <ligand>
        <name>UDP-N-acetyl-alpha-D-glucosamine</name>
        <dbReference type="ChEBI" id="CHEBI:57705"/>
    </ligand>
</feature>
<feature type="binding site" evidence="1">
    <location>
        <begin position="81"/>
        <end position="82"/>
    </location>
    <ligand>
        <name>UDP-N-acetyl-alpha-D-glucosamine</name>
        <dbReference type="ChEBI" id="CHEBI:57705"/>
    </ligand>
</feature>
<feature type="binding site" evidence="1">
    <location>
        <begin position="103"/>
        <end position="105"/>
    </location>
    <ligand>
        <name>UDP-N-acetyl-alpha-D-glucosamine</name>
        <dbReference type="ChEBI" id="CHEBI:57705"/>
    </ligand>
</feature>
<feature type="binding site" evidence="1">
    <location>
        <position position="105"/>
    </location>
    <ligand>
        <name>Mg(2+)</name>
        <dbReference type="ChEBI" id="CHEBI:18420"/>
    </ligand>
</feature>
<feature type="binding site" evidence="1">
    <location>
        <position position="140"/>
    </location>
    <ligand>
        <name>UDP-N-acetyl-alpha-D-glucosamine</name>
        <dbReference type="ChEBI" id="CHEBI:57705"/>
    </ligand>
</feature>
<feature type="binding site" evidence="1">
    <location>
        <position position="154"/>
    </location>
    <ligand>
        <name>UDP-N-acetyl-alpha-D-glucosamine</name>
        <dbReference type="ChEBI" id="CHEBI:57705"/>
    </ligand>
</feature>
<feature type="binding site" evidence="1">
    <location>
        <position position="169"/>
    </location>
    <ligand>
        <name>UDP-N-acetyl-alpha-D-glucosamine</name>
        <dbReference type="ChEBI" id="CHEBI:57705"/>
    </ligand>
</feature>
<feature type="binding site" evidence="1">
    <location>
        <position position="227"/>
    </location>
    <ligand>
        <name>Mg(2+)</name>
        <dbReference type="ChEBI" id="CHEBI:18420"/>
    </ligand>
</feature>
<feature type="binding site" evidence="1">
    <location>
        <position position="227"/>
    </location>
    <ligand>
        <name>UDP-N-acetyl-alpha-D-glucosamine</name>
        <dbReference type="ChEBI" id="CHEBI:57705"/>
    </ligand>
</feature>
<feature type="binding site" evidence="1">
    <location>
        <position position="333"/>
    </location>
    <ligand>
        <name>UDP-N-acetyl-alpha-D-glucosamine</name>
        <dbReference type="ChEBI" id="CHEBI:57705"/>
    </ligand>
</feature>
<feature type="binding site" evidence="1">
    <location>
        <position position="351"/>
    </location>
    <ligand>
        <name>UDP-N-acetyl-alpha-D-glucosamine</name>
        <dbReference type="ChEBI" id="CHEBI:57705"/>
    </ligand>
</feature>
<feature type="binding site" evidence="1">
    <location>
        <position position="366"/>
    </location>
    <ligand>
        <name>UDP-N-acetyl-alpha-D-glucosamine</name>
        <dbReference type="ChEBI" id="CHEBI:57705"/>
    </ligand>
</feature>
<feature type="binding site" evidence="1">
    <location>
        <position position="377"/>
    </location>
    <ligand>
        <name>UDP-N-acetyl-alpha-D-glucosamine</name>
        <dbReference type="ChEBI" id="CHEBI:57705"/>
    </ligand>
</feature>
<feature type="binding site" evidence="1">
    <location>
        <position position="380"/>
    </location>
    <ligand>
        <name>acetyl-CoA</name>
        <dbReference type="ChEBI" id="CHEBI:57288"/>
    </ligand>
</feature>
<feature type="binding site" evidence="1">
    <location>
        <begin position="386"/>
        <end position="387"/>
    </location>
    <ligand>
        <name>acetyl-CoA</name>
        <dbReference type="ChEBI" id="CHEBI:57288"/>
    </ligand>
</feature>
<feature type="binding site" evidence="1">
    <location>
        <position position="405"/>
    </location>
    <ligand>
        <name>acetyl-CoA</name>
        <dbReference type="ChEBI" id="CHEBI:57288"/>
    </ligand>
</feature>
<feature type="binding site" evidence="1">
    <location>
        <position position="423"/>
    </location>
    <ligand>
        <name>acetyl-CoA</name>
        <dbReference type="ChEBI" id="CHEBI:57288"/>
    </ligand>
</feature>
<feature type="binding site" evidence="1">
    <location>
        <position position="440"/>
    </location>
    <ligand>
        <name>acetyl-CoA</name>
        <dbReference type="ChEBI" id="CHEBI:57288"/>
    </ligand>
</feature>
<evidence type="ECO:0000255" key="1">
    <source>
        <dbReference type="HAMAP-Rule" id="MF_01631"/>
    </source>
</evidence>
<organism>
    <name type="scientific">Yersinia enterocolitica serotype O:8 / biotype 1B (strain NCTC 13174 / 8081)</name>
    <dbReference type="NCBI Taxonomy" id="393305"/>
    <lineage>
        <taxon>Bacteria</taxon>
        <taxon>Pseudomonadati</taxon>
        <taxon>Pseudomonadota</taxon>
        <taxon>Gammaproteobacteria</taxon>
        <taxon>Enterobacterales</taxon>
        <taxon>Yersiniaceae</taxon>
        <taxon>Yersinia</taxon>
    </lineage>
</organism>
<keyword id="KW-0012">Acyltransferase</keyword>
<keyword id="KW-0133">Cell shape</keyword>
<keyword id="KW-0961">Cell wall biogenesis/degradation</keyword>
<keyword id="KW-0963">Cytoplasm</keyword>
<keyword id="KW-0460">Magnesium</keyword>
<keyword id="KW-0479">Metal-binding</keyword>
<keyword id="KW-0511">Multifunctional enzyme</keyword>
<keyword id="KW-0548">Nucleotidyltransferase</keyword>
<keyword id="KW-0573">Peptidoglycan synthesis</keyword>
<keyword id="KW-0677">Repeat</keyword>
<keyword id="KW-0808">Transferase</keyword>
<dbReference type="EC" id="2.7.7.23" evidence="1"/>
<dbReference type="EC" id="2.3.1.157" evidence="1"/>
<dbReference type="EMBL" id="AM286415">
    <property type="protein sequence ID" value="CAL14218.1"/>
    <property type="molecule type" value="Genomic_DNA"/>
</dbReference>
<dbReference type="RefSeq" id="WP_005175168.1">
    <property type="nucleotide sequence ID" value="NC_008800.1"/>
</dbReference>
<dbReference type="RefSeq" id="YP_001008336.1">
    <property type="nucleotide sequence ID" value="NC_008800.1"/>
</dbReference>
<dbReference type="SMR" id="A1JTC3"/>
<dbReference type="KEGG" id="yen:YE4204"/>
<dbReference type="PATRIC" id="fig|393305.7.peg.4470"/>
<dbReference type="eggNOG" id="COG1207">
    <property type="taxonomic scope" value="Bacteria"/>
</dbReference>
<dbReference type="HOGENOM" id="CLU_029499_15_2_6"/>
<dbReference type="OrthoDB" id="9775031at2"/>
<dbReference type="UniPathway" id="UPA00113">
    <property type="reaction ID" value="UER00532"/>
</dbReference>
<dbReference type="UniPathway" id="UPA00113">
    <property type="reaction ID" value="UER00533"/>
</dbReference>
<dbReference type="UniPathway" id="UPA00973"/>
<dbReference type="Proteomes" id="UP000000642">
    <property type="component" value="Chromosome"/>
</dbReference>
<dbReference type="GO" id="GO:0005737">
    <property type="term" value="C:cytoplasm"/>
    <property type="evidence" value="ECO:0007669"/>
    <property type="project" value="UniProtKB-SubCell"/>
</dbReference>
<dbReference type="GO" id="GO:0016020">
    <property type="term" value="C:membrane"/>
    <property type="evidence" value="ECO:0007669"/>
    <property type="project" value="GOC"/>
</dbReference>
<dbReference type="GO" id="GO:0019134">
    <property type="term" value="F:glucosamine-1-phosphate N-acetyltransferase activity"/>
    <property type="evidence" value="ECO:0007669"/>
    <property type="project" value="UniProtKB-UniRule"/>
</dbReference>
<dbReference type="GO" id="GO:0000287">
    <property type="term" value="F:magnesium ion binding"/>
    <property type="evidence" value="ECO:0007669"/>
    <property type="project" value="UniProtKB-UniRule"/>
</dbReference>
<dbReference type="GO" id="GO:0003977">
    <property type="term" value="F:UDP-N-acetylglucosamine diphosphorylase activity"/>
    <property type="evidence" value="ECO:0007669"/>
    <property type="project" value="UniProtKB-UniRule"/>
</dbReference>
<dbReference type="GO" id="GO:0000902">
    <property type="term" value="P:cell morphogenesis"/>
    <property type="evidence" value="ECO:0007669"/>
    <property type="project" value="UniProtKB-UniRule"/>
</dbReference>
<dbReference type="GO" id="GO:0071555">
    <property type="term" value="P:cell wall organization"/>
    <property type="evidence" value="ECO:0007669"/>
    <property type="project" value="UniProtKB-KW"/>
</dbReference>
<dbReference type="GO" id="GO:0009245">
    <property type="term" value="P:lipid A biosynthetic process"/>
    <property type="evidence" value="ECO:0007669"/>
    <property type="project" value="UniProtKB-UniRule"/>
</dbReference>
<dbReference type="GO" id="GO:0009252">
    <property type="term" value="P:peptidoglycan biosynthetic process"/>
    <property type="evidence" value="ECO:0007669"/>
    <property type="project" value="UniProtKB-UniRule"/>
</dbReference>
<dbReference type="GO" id="GO:0008360">
    <property type="term" value="P:regulation of cell shape"/>
    <property type="evidence" value="ECO:0007669"/>
    <property type="project" value="UniProtKB-KW"/>
</dbReference>
<dbReference type="GO" id="GO:0006048">
    <property type="term" value="P:UDP-N-acetylglucosamine biosynthetic process"/>
    <property type="evidence" value="ECO:0007669"/>
    <property type="project" value="UniProtKB-UniPathway"/>
</dbReference>
<dbReference type="CDD" id="cd02540">
    <property type="entry name" value="GT2_GlmU_N_bac"/>
    <property type="match status" value="1"/>
</dbReference>
<dbReference type="CDD" id="cd03353">
    <property type="entry name" value="LbH_GlmU_C"/>
    <property type="match status" value="1"/>
</dbReference>
<dbReference type="FunFam" id="2.160.10.10:FF:000011">
    <property type="entry name" value="Bifunctional protein GlmU"/>
    <property type="match status" value="1"/>
</dbReference>
<dbReference type="FunFam" id="3.90.550.10:FF:000006">
    <property type="entry name" value="Bifunctional protein GlmU"/>
    <property type="match status" value="1"/>
</dbReference>
<dbReference type="Gene3D" id="2.160.10.10">
    <property type="entry name" value="Hexapeptide repeat proteins"/>
    <property type="match status" value="1"/>
</dbReference>
<dbReference type="Gene3D" id="3.90.550.10">
    <property type="entry name" value="Spore Coat Polysaccharide Biosynthesis Protein SpsA, Chain A"/>
    <property type="match status" value="1"/>
</dbReference>
<dbReference type="HAMAP" id="MF_01631">
    <property type="entry name" value="GlmU"/>
    <property type="match status" value="1"/>
</dbReference>
<dbReference type="InterPro" id="IPR005882">
    <property type="entry name" value="Bifunctional_GlmU"/>
</dbReference>
<dbReference type="InterPro" id="IPR050065">
    <property type="entry name" value="GlmU-like"/>
</dbReference>
<dbReference type="InterPro" id="IPR038009">
    <property type="entry name" value="GlmU_C_LbH"/>
</dbReference>
<dbReference type="InterPro" id="IPR001451">
    <property type="entry name" value="Hexapep"/>
</dbReference>
<dbReference type="InterPro" id="IPR018357">
    <property type="entry name" value="Hexapep_transf_CS"/>
</dbReference>
<dbReference type="InterPro" id="IPR025877">
    <property type="entry name" value="MobA-like_NTP_Trfase"/>
</dbReference>
<dbReference type="InterPro" id="IPR029044">
    <property type="entry name" value="Nucleotide-diphossugar_trans"/>
</dbReference>
<dbReference type="InterPro" id="IPR011004">
    <property type="entry name" value="Trimer_LpxA-like_sf"/>
</dbReference>
<dbReference type="NCBIfam" id="TIGR01173">
    <property type="entry name" value="glmU"/>
    <property type="match status" value="1"/>
</dbReference>
<dbReference type="NCBIfam" id="NF006986">
    <property type="entry name" value="PRK09451.1"/>
    <property type="match status" value="1"/>
</dbReference>
<dbReference type="PANTHER" id="PTHR43584:SF3">
    <property type="entry name" value="BIFUNCTIONAL PROTEIN GLMU"/>
    <property type="match status" value="1"/>
</dbReference>
<dbReference type="PANTHER" id="PTHR43584">
    <property type="entry name" value="NUCLEOTIDYL TRANSFERASE"/>
    <property type="match status" value="1"/>
</dbReference>
<dbReference type="Pfam" id="PF00132">
    <property type="entry name" value="Hexapep"/>
    <property type="match status" value="1"/>
</dbReference>
<dbReference type="Pfam" id="PF12804">
    <property type="entry name" value="NTP_transf_3"/>
    <property type="match status" value="1"/>
</dbReference>
<dbReference type="SUPFAM" id="SSF53448">
    <property type="entry name" value="Nucleotide-diphospho-sugar transferases"/>
    <property type="match status" value="1"/>
</dbReference>
<dbReference type="SUPFAM" id="SSF51161">
    <property type="entry name" value="Trimeric LpxA-like enzymes"/>
    <property type="match status" value="1"/>
</dbReference>
<dbReference type="PROSITE" id="PS00101">
    <property type="entry name" value="HEXAPEP_TRANSFERASES"/>
    <property type="match status" value="1"/>
</dbReference>
<protein>
    <recommendedName>
        <fullName evidence="1">Bifunctional protein GlmU</fullName>
    </recommendedName>
    <domain>
        <recommendedName>
            <fullName evidence="1">UDP-N-acetylglucosamine pyrophosphorylase</fullName>
            <ecNumber evidence="1">2.7.7.23</ecNumber>
        </recommendedName>
        <alternativeName>
            <fullName evidence="1">N-acetylglucosamine-1-phosphate uridyltransferase</fullName>
        </alternativeName>
    </domain>
    <domain>
        <recommendedName>
            <fullName evidence="1">Glucosamine-1-phosphate N-acetyltransferase</fullName>
            <ecNumber evidence="1">2.3.1.157</ecNumber>
        </recommendedName>
    </domain>
</protein>
<accession>A1JTC3</accession>
<proteinExistence type="inferred from homology"/>
<name>GLMU_YERE8</name>
<sequence length="456" mass="48776">MSNSSMSVVILAAGKGTRMYSDLPKVLHPLAGKPMVQHVIDAAMKLGAQQVHLVYGHGGELLQKTLTDPALNWVLQAEQLGTGHAMQQAAPHFADDEDVLMLYGDVPLISVDTLQRLLAAKPQGGIGLLTVKLDNPSGYGRIVRENGDVVGIVEHKDASDTQREINEINTGILVANGRDLKRWLSLLNNNNAQGEFYITDIIALAHADGKKIATVHPARLSEVEGVNNRLQLAALERVYQSEQAEKLLLAGVMLLDPARFDLRGELTHGRDITIDTNVIIEGHVTLGDRVRIGTGCVLKNCVIGDDSEISPYSVLEDSRLDAGCTVGPFARLRPGAELAEGAHVGNFVEIKKARLGKGSKAGHLSYLGDAEIGSGVNIGAGTITCNYDGANKFKTIIGDDVFVGSDTQLVAPVTVANGATIAAGTTVTRDIAENELVLSRVKQVHVQGWQRPIKKK</sequence>
<reference key="1">
    <citation type="journal article" date="2006" name="PLoS Genet.">
        <title>The complete genome sequence and comparative genome analysis of the high pathogenicity Yersinia enterocolitica strain 8081.</title>
        <authorList>
            <person name="Thomson N.R."/>
            <person name="Howard S."/>
            <person name="Wren B.W."/>
            <person name="Holden M.T.G."/>
            <person name="Crossman L."/>
            <person name="Challis G.L."/>
            <person name="Churcher C."/>
            <person name="Mungall K."/>
            <person name="Brooks K."/>
            <person name="Chillingworth T."/>
            <person name="Feltwell T."/>
            <person name="Abdellah Z."/>
            <person name="Hauser H."/>
            <person name="Jagels K."/>
            <person name="Maddison M."/>
            <person name="Moule S."/>
            <person name="Sanders M."/>
            <person name="Whitehead S."/>
            <person name="Quail M.A."/>
            <person name="Dougan G."/>
            <person name="Parkhill J."/>
            <person name="Prentice M.B."/>
        </authorList>
    </citation>
    <scope>NUCLEOTIDE SEQUENCE [LARGE SCALE GENOMIC DNA]</scope>
    <source>
        <strain>NCTC 13174 / 8081</strain>
    </source>
</reference>
<gene>
    <name evidence="1" type="primary">glmU</name>
    <name type="ordered locus">YE4204</name>
</gene>